<name>RS17_MYCBO</name>
<accession>O06051</accession>
<accession>A0A1R3XW60</accession>
<accession>Q7U1F4</accession>
<accession>X2BFY6</accession>
<keyword id="KW-0903">Direct protein sequencing</keyword>
<keyword id="KW-1185">Reference proteome</keyword>
<keyword id="KW-0687">Ribonucleoprotein</keyword>
<keyword id="KW-0689">Ribosomal protein</keyword>
<keyword id="KW-0694">RNA-binding</keyword>
<keyword id="KW-0699">rRNA-binding</keyword>
<organism>
    <name type="scientific">Mycobacterium bovis (strain ATCC BAA-935 / AF2122/97)</name>
    <dbReference type="NCBI Taxonomy" id="233413"/>
    <lineage>
        <taxon>Bacteria</taxon>
        <taxon>Bacillati</taxon>
        <taxon>Actinomycetota</taxon>
        <taxon>Actinomycetes</taxon>
        <taxon>Mycobacteriales</taxon>
        <taxon>Mycobacteriaceae</taxon>
        <taxon>Mycobacterium</taxon>
        <taxon>Mycobacterium tuberculosis complex</taxon>
    </lineage>
</organism>
<gene>
    <name evidence="1" type="primary">rpsQ</name>
    <name type="ordered locus">BQ2027_MB0730</name>
</gene>
<protein>
    <recommendedName>
        <fullName evidence="1">Small ribosomal subunit protein uS17</fullName>
    </recommendedName>
    <alternativeName>
        <fullName evidence="4">30S ribosomal protein S17</fullName>
    </alternativeName>
</protein>
<feature type="initiator methionine" description="Removed" evidence="3">
    <location>
        <position position="1"/>
    </location>
</feature>
<feature type="chain" id="PRO_0000128465" description="Small ribosomal subunit protein uS17">
    <location>
        <begin position="2"/>
        <end position="135"/>
    </location>
</feature>
<feature type="region of interest" description="Disordered" evidence="2">
    <location>
        <begin position="1"/>
        <end position="59"/>
    </location>
</feature>
<feature type="compositionally biased region" description="Low complexity" evidence="2">
    <location>
        <begin position="8"/>
        <end position="42"/>
    </location>
</feature>
<feature type="compositionally biased region" description="Basic residues" evidence="2">
    <location>
        <begin position="43"/>
        <end position="59"/>
    </location>
</feature>
<feature type="sequence conflict" description="In Ref. 1; CAA73681." evidence="4" ref="1">
    <original>K</original>
    <variation>KP</variation>
    <location>
        <position position="135"/>
    </location>
</feature>
<comment type="function">
    <text evidence="1">One of the primary rRNA binding proteins, it binds specifically to the 5'-end of 16S ribosomal RNA.</text>
</comment>
<comment type="subunit">
    <text evidence="1">Part of the 30S ribosomal subunit.</text>
</comment>
<comment type="similarity">
    <text evidence="1">Belongs to the universal ribosomal protein uS17 family.</text>
</comment>
<comment type="sequence caution" evidence="4">
    <conflict type="erroneous initiation">
        <sequence resource="EMBL-CDS" id="SIT99329"/>
    </conflict>
    <text>Extended N-terminus.</text>
</comment>
<evidence type="ECO:0000255" key="1">
    <source>
        <dbReference type="HAMAP-Rule" id="MF_01345"/>
    </source>
</evidence>
<evidence type="ECO:0000256" key="2">
    <source>
        <dbReference type="SAM" id="MobiDB-lite"/>
    </source>
</evidence>
<evidence type="ECO:0000269" key="3">
    <source>
    </source>
</evidence>
<evidence type="ECO:0000305" key="4"/>
<sequence length="135" mass="14741">MAEAKTGAKAAPRVAKAAKAAPKKAAPNDAEAIGAANAANVKGPKHTPRTPKPRGRRKTRIGYVVSDKMQKTIVVELEDRMRHPLYGKIIRTTKKVKAHDEDSVAGIGDRVSLMETRPLSATKRWRLVEILEKAK</sequence>
<dbReference type="EMBL" id="Y13228">
    <property type="protein sequence ID" value="CAA73681.1"/>
    <property type="molecule type" value="Genomic_DNA"/>
</dbReference>
<dbReference type="EMBL" id="LT708304">
    <property type="protein sequence ID" value="SIT99329.1"/>
    <property type="status" value="ALT_INIT"/>
    <property type="molecule type" value="Genomic_DNA"/>
</dbReference>
<dbReference type="PIR" id="S36892">
    <property type="entry name" value="S36892"/>
</dbReference>
<dbReference type="RefSeq" id="NP_854388.1">
    <property type="nucleotide sequence ID" value="NC_002945.3"/>
</dbReference>
<dbReference type="SMR" id="O06051"/>
<dbReference type="KEGG" id="mbo:BQ2027_MB0730"/>
<dbReference type="PATRIC" id="fig|233413.5.peg.796"/>
<dbReference type="Proteomes" id="UP000001419">
    <property type="component" value="Chromosome"/>
</dbReference>
<dbReference type="GO" id="GO:0022627">
    <property type="term" value="C:cytosolic small ribosomal subunit"/>
    <property type="evidence" value="ECO:0007669"/>
    <property type="project" value="TreeGrafter"/>
</dbReference>
<dbReference type="GO" id="GO:0019843">
    <property type="term" value="F:rRNA binding"/>
    <property type="evidence" value="ECO:0007669"/>
    <property type="project" value="UniProtKB-UniRule"/>
</dbReference>
<dbReference type="GO" id="GO:0003735">
    <property type="term" value="F:structural constituent of ribosome"/>
    <property type="evidence" value="ECO:0007669"/>
    <property type="project" value="InterPro"/>
</dbReference>
<dbReference type="GO" id="GO:0006412">
    <property type="term" value="P:translation"/>
    <property type="evidence" value="ECO:0007669"/>
    <property type="project" value="UniProtKB-UniRule"/>
</dbReference>
<dbReference type="CDD" id="cd00364">
    <property type="entry name" value="Ribosomal_uS17"/>
    <property type="match status" value="1"/>
</dbReference>
<dbReference type="FunFam" id="2.40.50.140:FF:000026">
    <property type="entry name" value="30S ribosomal protein S17"/>
    <property type="match status" value="1"/>
</dbReference>
<dbReference type="Gene3D" id="2.40.50.140">
    <property type="entry name" value="Nucleic acid-binding proteins"/>
    <property type="match status" value="1"/>
</dbReference>
<dbReference type="HAMAP" id="MF_01345_B">
    <property type="entry name" value="Ribosomal_uS17_B"/>
    <property type="match status" value="1"/>
</dbReference>
<dbReference type="InterPro" id="IPR012340">
    <property type="entry name" value="NA-bd_OB-fold"/>
</dbReference>
<dbReference type="InterPro" id="IPR000266">
    <property type="entry name" value="Ribosomal_uS17"/>
</dbReference>
<dbReference type="InterPro" id="IPR019984">
    <property type="entry name" value="Ribosomal_uS17_bact/chlr"/>
</dbReference>
<dbReference type="InterPro" id="IPR019979">
    <property type="entry name" value="Ribosomal_uS17_CS"/>
</dbReference>
<dbReference type="NCBIfam" id="NF004123">
    <property type="entry name" value="PRK05610.1"/>
    <property type="match status" value="1"/>
</dbReference>
<dbReference type="NCBIfam" id="TIGR03635">
    <property type="entry name" value="uS17_bact"/>
    <property type="match status" value="1"/>
</dbReference>
<dbReference type="PANTHER" id="PTHR10744">
    <property type="entry name" value="40S RIBOSOMAL PROTEIN S11 FAMILY MEMBER"/>
    <property type="match status" value="1"/>
</dbReference>
<dbReference type="PANTHER" id="PTHR10744:SF1">
    <property type="entry name" value="SMALL RIBOSOMAL SUBUNIT PROTEIN US17M"/>
    <property type="match status" value="1"/>
</dbReference>
<dbReference type="Pfam" id="PF00366">
    <property type="entry name" value="Ribosomal_S17"/>
    <property type="match status" value="1"/>
</dbReference>
<dbReference type="PRINTS" id="PR00973">
    <property type="entry name" value="RIBOSOMALS17"/>
</dbReference>
<dbReference type="SUPFAM" id="SSF50249">
    <property type="entry name" value="Nucleic acid-binding proteins"/>
    <property type="match status" value="1"/>
</dbReference>
<dbReference type="PROSITE" id="PS00056">
    <property type="entry name" value="RIBOSOMAL_S17"/>
    <property type="match status" value="1"/>
</dbReference>
<proteinExistence type="evidence at protein level"/>
<reference key="1">
    <citation type="journal article" date="1997" name="Mol. Microbiol.">
        <title>The role of ribosomal RNAs in macrolide resistance.</title>
        <authorList>
            <person name="Sander P."/>
            <person name="Prammananan T."/>
            <person name="Meier A."/>
            <person name="Frischkorn K."/>
            <person name="Boettger E.C."/>
        </authorList>
    </citation>
    <scope>NUCLEOTIDE SEQUENCE [GENOMIC DNA]</scope>
    <source>
        <strain>BCG</strain>
    </source>
</reference>
<reference key="2">
    <citation type="journal article" date="2003" name="Proc. Natl. Acad. Sci. U.S.A.">
        <title>The complete genome sequence of Mycobacterium bovis.</title>
        <authorList>
            <person name="Garnier T."/>
            <person name="Eiglmeier K."/>
            <person name="Camus J.-C."/>
            <person name="Medina N."/>
            <person name="Mansoor H."/>
            <person name="Pryor M."/>
            <person name="Duthoy S."/>
            <person name="Grondin S."/>
            <person name="Lacroix C."/>
            <person name="Monsempe C."/>
            <person name="Simon S."/>
            <person name="Harris B."/>
            <person name="Atkin R."/>
            <person name="Doggett J."/>
            <person name="Mayes R."/>
            <person name="Keating L."/>
            <person name="Wheeler P.R."/>
            <person name="Parkhill J."/>
            <person name="Barrell B.G."/>
            <person name="Cole S.T."/>
            <person name="Gordon S.V."/>
            <person name="Hewinson R.G."/>
        </authorList>
    </citation>
    <scope>NUCLEOTIDE SEQUENCE [LARGE SCALE GENOMIC DNA]</scope>
    <source>
        <strain>ATCC BAA-935 / AF2122/97</strain>
    </source>
</reference>
<reference key="3">
    <citation type="journal article" date="2017" name="Genome Announc.">
        <title>Updated reference genome sequence and annotation of Mycobacterium bovis AF2122/97.</title>
        <authorList>
            <person name="Malone K.M."/>
            <person name="Farrell D."/>
            <person name="Stuber T.P."/>
            <person name="Schubert O.T."/>
            <person name="Aebersold R."/>
            <person name="Robbe-Austerman S."/>
            <person name="Gordon S.V."/>
        </authorList>
    </citation>
    <scope>NUCLEOTIDE SEQUENCE [LARGE SCALE GENOMIC DNA]</scope>
    <scope>GENOME REANNOTATION</scope>
    <source>
        <strain>ATCC BAA-935 / AF2122/97</strain>
    </source>
</reference>
<reference key="4">
    <citation type="journal article" date="1993" name="FEBS Lett.">
        <title>Isolation and amino acid sequence of the 30S ribosomal protein S19 from Mycobacterium bovis BCG.</title>
        <authorList>
            <person name="Ohara N."/>
            <person name="Kimura M."/>
            <person name="Higashi Y."/>
            <person name="Yamada T."/>
        </authorList>
    </citation>
    <scope>PROTEIN SEQUENCE OF 2-15</scope>
    <source>
        <strain>BCG</strain>
    </source>
</reference>